<comment type="function">
    <text evidence="1">Forms part of the ribosomal stalk, playing a central role in the interaction of the ribosome with GTP-bound translation factors.</text>
</comment>
<comment type="subunit">
    <text evidence="1">Part of the ribosomal stalk of the 50S ribosomal subunit. The N-terminus interacts with L11 and the large rRNA to form the base of the stalk. The C-terminus forms an elongated spine to which L12 dimers bind in a sequential fashion forming a multimeric L10(L12)X complex.</text>
</comment>
<comment type="similarity">
    <text evidence="1">Belongs to the universal ribosomal protein uL10 family.</text>
</comment>
<gene>
    <name evidence="1" type="primary">rplJ</name>
    <name type="ordered locus">Ajs_3899</name>
</gene>
<accession>A1WCN1</accession>
<sequence>MSLNRSEKEAVINEVTSLAAKAQTLVIAEYRGITVADMTKLRVEARSKGVSLSVLKNTLARRAVAGSQFDVVADQMTGPLIYGFSEDAVAAAKVVADFAKTNDKLVIRGGAFAGKALDVNGVKQLANIPTKEVLLAQLCGLLMSPISRTAVVLGALAAKKGEGEPAAA</sequence>
<evidence type="ECO:0000255" key="1">
    <source>
        <dbReference type="HAMAP-Rule" id="MF_00362"/>
    </source>
</evidence>
<evidence type="ECO:0000305" key="2"/>
<reference key="1">
    <citation type="submission" date="2006-12" db="EMBL/GenBank/DDBJ databases">
        <title>Complete sequence of chromosome 1 of Acidovorax sp. JS42.</title>
        <authorList>
            <person name="Copeland A."/>
            <person name="Lucas S."/>
            <person name="Lapidus A."/>
            <person name="Barry K."/>
            <person name="Detter J.C."/>
            <person name="Glavina del Rio T."/>
            <person name="Dalin E."/>
            <person name="Tice H."/>
            <person name="Pitluck S."/>
            <person name="Chertkov O."/>
            <person name="Brettin T."/>
            <person name="Bruce D."/>
            <person name="Han C."/>
            <person name="Tapia R."/>
            <person name="Gilna P."/>
            <person name="Schmutz J."/>
            <person name="Larimer F."/>
            <person name="Land M."/>
            <person name="Hauser L."/>
            <person name="Kyrpides N."/>
            <person name="Kim E."/>
            <person name="Stahl D."/>
            <person name="Richardson P."/>
        </authorList>
    </citation>
    <scope>NUCLEOTIDE SEQUENCE [LARGE SCALE GENOMIC DNA]</scope>
    <source>
        <strain>JS42</strain>
    </source>
</reference>
<dbReference type="EMBL" id="CP000539">
    <property type="protein sequence ID" value="ABM44006.1"/>
    <property type="molecule type" value="Genomic_DNA"/>
</dbReference>
<dbReference type="SMR" id="A1WCN1"/>
<dbReference type="STRING" id="232721.Ajs_3899"/>
<dbReference type="KEGG" id="ajs:Ajs_3899"/>
<dbReference type="eggNOG" id="COG0244">
    <property type="taxonomic scope" value="Bacteria"/>
</dbReference>
<dbReference type="HOGENOM" id="CLU_092227_0_1_4"/>
<dbReference type="Proteomes" id="UP000000645">
    <property type="component" value="Chromosome"/>
</dbReference>
<dbReference type="GO" id="GO:0015934">
    <property type="term" value="C:large ribosomal subunit"/>
    <property type="evidence" value="ECO:0007669"/>
    <property type="project" value="InterPro"/>
</dbReference>
<dbReference type="GO" id="GO:0070180">
    <property type="term" value="F:large ribosomal subunit rRNA binding"/>
    <property type="evidence" value="ECO:0007669"/>
    <property type="project" value="UniProtKB-UniRule"/>
</dbReference>
<dbReference type="GO" id="GO:0003735">
    <property type="term" value="F:structural constituent of ribosome"/>
    <property type="evidence" value="ECO:0007669"/>
    <property type="project" value="InterPro"/>
</dbReference>
<dbReference type="GO" id="GO:0006412">
    <property type="term" value="P:translation"/>
    <property type="evidence" value="ECO:0007669"/>
    <property type="project" value="UniProtKB-UniRule"/>
</dbReference>
<dbReference type="CDD" id="cd05797">
    <property type="entry name" value="Ribosomal_L10"/>
    <property type="match status" value="1"/>
</dbReference>
<dbReference type="Gene3D" id="3.30.70.1730">
    <property type="match status" value="1"/>
</dbReference>
<dbReference type="Gene3D" id="6.10.250.290">
    <property type="match status" value="1"/>
</dbReference>
<dbReference type="HAMAP" id="MF_00362">
    <property type="entry name" value="Ribosomal_uL10"/>
    <property type="match status" value="1"/>
</dbReference>
<dbReference type="InterPro" id="IPR001790">
    <property type="entry name" value="Ribosomal_uL10"/>
</dbReference>
<dbReference type="InterPro" id="IPR043141">
    <property type="entry name" value="Ribosomal_uL10-like_sf"/>
</dbReference>
<dbReference type="InterPro" id="IPR022973">
    <property type="entry name" value="Ribosomal_uL10_bac"/>
</dbReference>
<dbReference type="InterPro" id="IPR047865">
    <property type="entry name" value="Ribosomal_uL10_bac_type"/>
</dbReference>
<dbReference type="InterPro" id="IPR002363">
    <property type="entry name" value="Ribosomal_uL10_CS_bac"/>
</dbReference>
<dbReference type="NCBIfam" id="NF000955">
    <property type="entry name" value="PRK00099.1-1"/>
    <property type="match status" value="1"/>
</dbReference>
<dbReference type="PANTHER" id="PTHR11560">
    <property type="entry name" value="39S RIBOSOMAL PROTEIN L10, MITOCHONDRIAL"/>
    <property type="match status" value="1"/>
</dbReference>
<dbReference type="Pfam" id="PF00466">
    <property type="entry name" value="Ribosomal_L10"/>
    <property type="match status" value="1"/>
</dbReference>
<dbReference type="SUPFAM" id="SSF160369">
    <property type="entry name" value="Ribosomal protein L10-like"/>
    <property type="match status" value="1"/>
</dbReference>
<dbReference type="PROSITE" id="PS01109">
    <property type="entry name" value="RIBOSOMAL_L10"/>
    <property type="match status" value="1"/>
</dbReference>
<organism>
    <name type="scientific">Acidovorax sp. (strain JS42)</name>
    <dbReference type="NCBI Taxonomy" id="232721"/>
    <lineage>
        <taxon>Bacteria</taxon>
        <taxon>Pseudomonadati</taxon>
        <taxon>Pseudomonadota</taxon>
        <taxon>Betaproteobacteria</taxon>
        <taxon>Burkholderiales</taxon>
        <taxon>Comamonadaceae</taxon>
        <taxon>Acidovorax</taxon>
    </lineage>
</organism>
<keyword id="KW-0687">Ribonucleoprotein</keyword>
<keyword id="KW-0689">Ribosomal protein</keyword>
<keyword id="KW-0694">RNA-binding</keyword>
<keyword id="KW-0699">rRNA-binding</keyword>
<feature type="chain" id="PRO_1000005458" description="Large ribosomal subunit protein uL10">
    <location>
        <begin position="1"/>
        <end position="168"/>
    </location>
</feature>
<protein>
    <recommendedName>
        <fullName evidence="1">Large ribosomal subunit protein uL10</fullName>
    </recommendedName>
    <alternativeName>
        <fullName evidence="2">50S ribosomal protein L10</fullName>
    </alternativeName>
</protein>
<proteinExistence type="inferred from homology"/>
<name>RL10_ACISJ</name>